<accession>P97738</accession>
<proteinExistence type="evidence at protein level"/>
<comment type="function">
    <text>Likely to play role in the modification of cellular properties that underlie long-term plasticity. Binds to agar matrix in a calcium-dependent manner.</text>
</comment>
<comment type="cofactor">
    <cofactor evidence="1">
        <name>Ca(2+)</name>
        <dbReference type="ChEBI" id="CHEBI:29108"/>
    </cofactor>
    <text evidence="1">Binds 2 calcium ions per subunit.</text>
</comment>
<comment type="subunit">
    <text evidence="1">Homooligomer or heterooligomer (probably pentamer) with neuronal pentraxin receptor (NPTXR).</text>
</comment>
<comment type="subcellular location">
    <subcellularLocation>
        <location>Secreted</location>
    </subcellularLocation>
</comment>
<comment type="induction">
    <text>Rapidly induced in neurons of the hippocampus and cortex by physiological synaptic activity.</text>
</comment>
<protein>
    <recommendedName>
        <fullName>Neuronal pentraxin-2</fullName>
        <shortName>NP2</shortName>
    </recommendedName>
    <alternativeName>
        <fullName>Neuronal activity-regulated pentraxin</fullName>
    </alternativeName>
    <alternativeName>
        <fullName>Neuronal pentraxin II</fullName>
        <shortName>NP-II</shortName>
    </alternativeName>
</protein>
<feature type="signal peptide" evidence="2">
    <location>
        <begin position="1"/>
        <end position="14"/>
    </location>
</feature>
<feature type="chain" id="PRO_0000023553" description="Neuronal pentraxin-2">
    <location>
        <begin position="15"/>
        <end position="432"/>
    </location>
</feature>
<feature type="domain" description="Pentraxin (PTX)" evidence="3">
    <location>
        <begin position="224"/>
        <end position="425"/>
    </location>
</feature>
<feature type="binding site" evidence="1">
    <location>
        <position position="278"/>
    </location>
    <ligand>
        <name>Ca(2+)</name>
        <dbReference type="ChEBI" id="CHEBI:29108"/>
        <label>1</label>
    </ligand>
</feature>
<feature type="binding site" evidence="1">
    <location>
        <position position="356"/>
    </location>
    <ligand>
        <name>Ca(2+)</name>
        <dbReference type="ChEBI" id="CHEBI:29108"/>
        <label>1</label>
    </ligand>
</feature>
<feature type="binding site" evidence="3">
    <location>
        <position position="356"/>
    </location>
    <ligand>
        <name>Ca(2+)</name>
        <dbReference type="ChEBI" id="CHEBI:29108"/>
        <label>2</label>
    </ligand>
</feature>
<feature type="binding site" evidence="1">
    <location>
        <position position="357"/>
    </location>
    <ligand>
        <name>Ca(2+)</name>
        <dbReference type="ChEBI" id="CHEBI:29108"/>
        <label>1</label>
    </ligand>
</feature>
<feature type="binding site" evidence="1">
    <location>
        <position position="358"/>
    </location>
    <ligand>
        <name>Ca(2+)</name>
        <dbReference type="ChEBI" id="CHEBI:29108"/>
        <label>1</label>
    </ligand>
</feature>
<feature type="binding site" evidence="3">
    <location>
        <position position="358"/>
    </location>
    <ligand>
        <name>Ca(2+)</name>
        <dbReference type="ChEBI" id="CHEBI:29108"/>
        <label>2</label>
    </ligand>
</feature>
<feature type="binding site" evidence="3">
    <location>
        <position position="368"/>
    </location>
    <ligand>
        <name>Ca(2+)</name>
        <dbReference type="ChEBI" id="CHEBI:29108"/>
        <label>2</label>
    </ligand>
</feature>
<feature type="glycosylation site" description="N-linked (GlcNAc...) asparagine" evidence="2">
    <location>
        <position position="149"/>
    </location>
</feature>
<feature type="glycosylation site" description="N-linked (GlcNAc...) asparagine" evidence="2">
    <location>
        <position position="190"/>
    </location>
</feature>
<feature type="glycosylation site" description="N-linked (GlcNAc...) asparagine" evidence="2">
    <location>
        <position position="394"/>
    </location>
</feature>
<feature type="disulfide bond" evidence="3">
    <location>
        <begin position="254"/>
        <end position="314"/>
    </location>
</feature>
<gene>
    <name type="primary">Nptx2</name>
    <name type="synonym">Narp</name>
</gene>
<name>NPTX2_RAT</name>
<reference key="1">
    <citation type="journal article" date="1996" name="J. Neurosci.">
        <title>Narp, a novel member of the pentraxin family, promotes neurite outgrowth and is dynamically regulated by neuronal activity.</title>
        <authorList>
            <person name="Tsui C.C."/>
            <person name="Copeland N.G."/>
            <person name="Gilbert D.J."/>
            <person name="Jenkins N.A."/>
            <person name="Barnes C."/>
            <person name="Worley P.F."/>
        </authorList>
    </citation>
    <scope>NUCLEOTIDE SEQUENCE [MRNA]</scope>
    <scope>CHARACTERIZATION</scope>
    <source>
        <tissue>Hippocampus</tissue>
    </source>
</reference>
<dbReference type="EMBL" id="S82649">
    <property type="protein sequence ID" value="AAB46783.1"/>
    <property type="molecule type" value="mRNA"/>
</dbReference>
<dbReference type="SMR" id="P97738"/>
<dbReference type="CORUM" id="P97738"/>
<dbReference type="FunCoup" id="P97738">
    <property type="interactions" value="639"/>
</dbReference>
<dbReference type="STRING" id="10116.ENSRNOP00000001331"/>
<dbReference type="GlyCosmos" id="P97738">
    <property type="glycosylation" value="3 sites, No reported glycans"/>
</dbReference>
<dbReference type="GlyGen" id="P97738">
    <property type="glycosylation" value="3 sites"/>
</dbReference>
<dbReference type="iPTMnet" id="P97738"/>
<dbReference type="PhosphoSitePlus" id="P97738"/>
<dbReference type="PaxDb" id="10116-ENSRNOP00000001331"/>
<dbReference type="AGR" id="RGD:1309447"/>
<dbReference type="RGD" id="1309447">
    <property type="gene designation" value="Nptx2"/>
</dbReference>
<dbReference type="eggNOG" id="ENOG502QV29">
    <property type="taxonomic scope" value="Eukaryota"/>
</dbReference>
<dbReference type="InParanoid" id="P97738"/>
<dbReference type="PhylomeDB" id="P97738"/>
<dbReference type="PRO" id="PR:P97738"/>
<dbReference type="Proteomes" id="UP000002494">
    <property type="component" value="Unplaced"/>
</dbReference>
<dbReference type="GO" id="GO:0098892">
    <property type="term" value="C:extrinsic component of postsynaptic specialization membrane"/>
    <property type="evidence" value="ECO:0000314"/>
    <property type="project" value="SynGO"/>
</dbReference>
<dbReference type="GO" id="GO:0098978">
    <property type="term" value="C:glutamatergic synapse"/>
    <property type="evidence" value="ECO:0000314"/>
    <property type="project" value="SynGO"/>
</dbReference>
<dbReference type="GO" id="GO:0098793">
    <property type="term" value="C:presynapse"/>
    <property type="evidence" value="ECO:0000266"/>
    <property type="project" value="RGD"/>
</dbReference>
<dbReference type="GO" id="GO:0045202">
    <property type="term" value="C:synapse"/>
    <property type="evidence" value="ECO:0000266"/>
    <property type="project" value="RGD"/>
</dbReference>
<dbReference type="GO" id="GO:0043083">
    <property type="term" value="C:synaptic cleft"/>
    <property type="evidence" value="ECO:0000314"/>
    <property type="project" value="SynGO"/>
</dbReference>
<dbReference type="GO" id="GO:0030246">
    <property type="term" value="F:carbohydrate binding"/>
    <property type="evidence" value="ECO:0007669"/>
    <property type="project" value="UniProtKB-KW"/>
</dbReference>
<dbReference type="GO" id="GO:0046872">
    <property type="term" value="F:metal ion binding"/>
    <property type="evidence" value="ECO:0007669"/>
    <property type="project" value="UniProtKB-KW"/>
</dbReference>
<dbReference type="GO" id="GO:0008306">
    <property type="term" value="P:associative learning"/>
    <property type="evidence" value="ECO:0000266"/>
    <property type="project" value="RGD"/>
</dbReference>
<dbReference type="GO" id="GO:0099645">
    <property type="term" value="P:neurotransmitter receptor localization to postsynaptic specialization membrane"/>
    <property type="evidence" value="ECO:0000314"/>
    <property type="project" value="SynGO"/>
</dbReference>
<dbReference type="CDD" id="cd00152">
    <property type="entry name" value="PTX"/>
    <property type="match status" value="1"/>
</dbReference>
<dbReference type="FunFam" id="2.60.120.200:FF:000012">
    <property type="entry name" value="neuronal pentraxin receptor"/>
    <property type="match status" value="1"/>
</dbReference>
<dbReference type="Gene3D" id="2.60.120.200">
    <property type="match status" value="1"/>
</dbReference>
<dbReference type="InterPro" id="IPR013320">
    <property type="entry name" value="ConA-like_dom_sf"/>
</dbReference>
<dbReference type="InterPro" id="IPR051360">
    <property type="entry name" value="Neuronal_Pentraxin_Related"/>
</dbReference>
<dbReference type="InterPro" id="IPR030476">
    <property type="entry name" value="Pentaxin_CS"/>
</dbReference>
<dbReference type="InterPro" id="IPR001759">
    <property type="entry name" value="Pentraxin-related"/>
</dbReference>
<dbReference type="PANTHER" id="PTHR19277:SF1">
    <property type="entry name" value="NEURONAL PENTRAXIN-2"/>
    <property type="match status" value="1"/>
</dbReference>
<dbReference type="PANTHER" id="PTHR19277">
    <property type="entry name" value="PENTRAXIN"/>
    <property type="match status" value="1"/>
</dbReference>
<dbReference type="Pfam" id="PF00354">
    <property type="entry name" value="Pentaxin"/>
    <property type="match status" value="1"/>
</dbReference>
<dbReference type="PRINTS" id="PR00895">
    <property type="entry name" value="PENTAXIN"/>
</dbReference>
<dbReference type="SMART" id="SM00159">
    <property type="entry name" value="PTX"/>
    <property type="match status" value="1"/>
</dbReference>
<dbReference type="SUPFAM" id="SSF49899">
    <property type="entry name" value="Concanavalin A-like lectins/glucanases"/>
    <property type="match status" value="1"/>
</dbReference>
<dbReference type="PROSITE" id="PS00289">
    <property type="entry name" value="PTX_1"/>
    <property type="match status" value="1"/>
</dbReference>
<dbReference type="PROSITE" id="PS51828">
    <property type="entry name" value="PTX_2"/>
    <property type="match status" value="1"/>
</dbReference>
<evidence type="ECO:0000250" key="1"/>
<evidence type="ECO:0000255" key="2"/>
<evidence type="ECO:0000255" key="3">
    <source>
        <dbReference type="PROSITE-ProRule" id="PRU01172"/>
    </source>
</evidence>
<keyword id="KW-0106">Calcium</keyword>
<keyword id="KW-1015">Disulfide bond</keyword>
<keyword id="KW-0325">Glycoprotein</keyword>
<keyword id="KW-0430">Lectin</keyword>
<keyword id="KW-0479">Metal-binding</keyword>
<keyword id="KW-1185">Reference proteome</keyword>
<keyword id="KW-0964">Secreted</keyword>
<keyword id="KW-0732">Signal</keyword>
<organism>
    <name type="scientific">Rattus norvegicus</name>
    <name type="common">Rat</name>
    <dbReference type="NCBI Taxonomy" id="10116"/>
    <lineage>
        <taxon>Eukaryota</taxon>
        <taxon>Metazoa</taxon>
        <taxon>Chordata</taxon>
        <taxon>Craniata</taxon>
        <taxon>Vertebrata</taxon>
        <taxon>Euteleostomi</taxon>
        <taxon>Mammalia</taxon>
        <taxon>Eutheria</taxon>
        <taxon>Euarchontoglires</taxon>
        <taxon>Glires</taxon>
        <taxon>Rodentia</taxon>
        <taxon>Myomorpha</taxon>
        <taxon>Muroidea</taxon>
        <taxon>Muridae</taxon>
        <taxon>Murinae</taxon>
        <taxon>Rattus</taxon>
    </lineage>
</organism>
<sequence>MLALLTAGVALAVAAGQAQDNPIPGSRFVCTALPPEAARAGCPLPAMPMQGGALSPEEELRAAVLHWRETVVQQKETLGAQREAIRELTSKLARCEGLAGGKARGTGATGKDTMGDLPRDPGHVVEQLSRSLQTLKDRLESLELQLHTNASNAGLPSDFREVLQRRLGELERQLLRKVAELEDEKSLLHNETSAHRQKTENTLNALLQRVTELERGNSAFKSPDAFKVSLPLRTNYLYGKIKKTLPELYAFTICLWLRSSASPGIGTPFSYAVPGQANEIVLIEWGNNPIELLINDKVAQLPLFVSDGKWHHICITWTTRDGMWEAFQDGEKLGTGENLAPWHPIKPGGVLILGQEQDTVGGRFDATQAFVGELSQFNIWDRVLRAQEIINIANCSTNMPGNIIPWVDNNVDVFGGASKWPVETCEERLLDL</sequence>